<feature type="chain" id="PRO_1000085268" description="Chaperone protein DnaJ">
    <location>
        <begin position="1"/>
        <end position="382"/>
    </location>
</feature>
<feature type="domain" description="J" evidence="1">
    <location>
        <begin position="5"/>
        <end position="70"/>
    </location>
</feature>
<feature type="repeat" description="CXXCXGXG motif">
    <location>
        <begin position="154"/>
        <end position="161"/>
    </location>
</feature>
<feature type="repeat" description="CXXCXGXG motif">
    <location>
        <begin position="171"/>
        <end position="178"/>
    </location>
</feature>
<feature type="repeat" description="CXXCXGXG motif">
    <location>
        <begin position="193"/>
        <end position="200"/>
    </location>
</feature>
<feature type="repeat" description="CXXCXGXG motif">
    <location>
        <begin position="207"/>
        <end position="214"/>
    </location>
</feature>
<feature type="zinc finger region" description="CR-type" evidence="1">
    <location>
        <begin position="141"/>
        <end position="219"/>
    </location>
</feature>
<feature type="binding site" evidence="1">
    <location>
        <position position="154"/>
    </location>
    <ligand>
        <name>Zn(2+)</name>
        <dbReference type="ChEBI" id="CHEBI:29105"/>
        <label>1</label>
    </ligand>
</feature>
<feature type="binding site" evidence="1">
    <location>
        <position position="157"/>
    </location>
    <ligand>
        <name>Zn(2+)</name>
        <dbReference type="ChEBI" id="CHEBI:29105"/>
        <label>1</label>
    </ligand>
</feature>
<feature type="binding site" evidence="1">
    <location>
        <position position="171"/>
    </location>
    <ligand>
        <name>Zn(2+)</name>
        <dbReference type="ChEBI" id="CHEBI:29105"/>
        <label>2</label>
    </ligand>
</feature>
<feature type="binding site" evidence="1">
    <location>
        <position position="174"/>
    </location>
    <ligand>
        <name>Zn(2+)</name>
        <dbReference type="ChEBI" id="CHEBI:29105"/>
        <label>2</label>
    </ligand>
</feature>
<feature type="binding site" evidence="1">
    <location>
        <position position="193"/>
    </location>
    <ligand>
        <name>Zn(2+)</name>
        <dbReference type="ChEBI" id="CHEBI:29105"/>
        <label>2</label>
    </ligand>
</feature>
<feature type="binding site" evidence="1">
    <location>
        <position position="196"/>
    </location>
    <ligand>
        <name>Zn(2+)</name>
        <dbReference type="ChEBI" id="CHEBI:29105"/>
        <label>2</label>
    </ligand>
</feature>
<feature type="binding site" evidence="1">
    <location>
        <position position="207"/>
    </location>
    <ligand>
        <name>Zn(2+)</name>
        <dbReference type="ChEBI" id="CHEBI:29105"/>
        <label>1</label>
    </ligand>
</feature>
<feature type="binding site" evidence="1">
    <location>
        <position position="210"/>
    </location>
    <ligand>
        <name>Zn(2+)</name>
        <dbReference type="ChEBI" id="CHEBI:29105"/>
        <label>1</label>
    </ligand>
</feature>
<keyword id="KW-0143">Chaperone</keyword>
<keyword id="KW-0963">Cytoplasm</keyword>
<keyword id="KW-0235">DNA replication</keyword>
<keyword id="KW-0479">Metal-binding</keyword>
<keyword id="KW-0677">Repeat</keyword>
<keyword id="KW-0346">Stress response</keyword>
<keyword id="KW-0862">Zinc</keyword>
<keyword id="KW-0863">Zinc-finger</keyword>
<reference key="1">
    <citation type="submission" date="2007-02" db="EMBL/GenBank/DDBJ databases">
        <title>Complete sequence of chromosome 1 of Rhodobacter sphaeroides ATCC 17029.</title>
        <authorList>
            <person name="Copeland A."/>
            <person name="Lucas S."/>
            <person name="Lapidus A."/>
            <person name="Barry K."/>
            <person name="Detter J.C."/>
            <person name="Glavina del Rio T."/>
            <person name="Hammon N."/>
            <person name="Israni S."/>
            <person name="Dalin E."/>
            <person name="Tice H."/>
            <person name="Pitluck S."/>
            <person name="Kiss H."/>
            <person name="Brettin T."/>
            <person name="Bruce D."/>
            <person name="Han C."/>
            <person name="Tapia R."/>
            <person name="Gilna P."/>
            <person name="Schmutz J."/>
            <person name="Larimer F."/>
            <person name="Land M."/>
            <person name="Hauser L."/>
            <person name="Kyrpides N."/>
            <person name="Mikhailova N."/>
            <person name="Richardson P."/>
            <person name="Mackenzie C."/>
            <person name="Choudhary M."/>
            <person name="Donohue T.J."/>
            <person name="Kaplan S."/>
        </authorList>
    </citation>
    <scope>NUCLEOTIDE SEQUENCE [LARGE SCALE GENOMIC DNA]</scope>
    <source>
        <strain>ATCC 17029 / ATH 2.4.9</strain>
    </source>
</reference>
<name>DNAJ_CERS1</name>
<evidence type="ECO:0000255" key="1">
    <source>
        <dbReference type="HAMAP-Rule" id="MF_01152"/>
    </source>
</evidence>
<comment type="function">
    <text evidence="1">Participates actively in the response to hyperosmotic and heat shock by preventing the aggregation of stress-denatured proteins and by disaggregating proteins, also in an autonomous, DnaK-independent fashion. Unfolded proteins bind initially to DnaJ; upon interaction with the DnaJ-bound protein, DnaK hydrolyzes its bound ATP, resulting in the formation of a stable complex. GrpE releases ADP from DnaK; ATP binding to DnaK triggers the release of the substrate protein, thus completing the reaction cycle. Several rounds of ATP-dependent interactions between DnaJ, DnaK and GrpE are required for fully efficient folding. Also involved, together with DnaK and GrpE, in the DNA replication of plasmids through activation of initiation proteins.</text>
</comment>
<comment type="cofactor">
    <cofactor evidence="1">
        <name>Zn(2+)</name>
        <dbReference type="ChEBI" id="CHEBI:29105"/>
    </cofactor>
    <text evidence="1">Binds 2 Zn(2+) ions per monomer.</text>
</comment>
<comment type="subunit">
    <text evidence="1">Homodimer.</text>
</comment>
<comment type="subcellular location">
    <subcellularLocation>
        <location evidence="1">Cytoplasm</location>
    </subcellularLocation>
</comment>
<comment type="domain">
    <text evidence="1">The J domain is necessary and sufficient to stimulate DnaK ATPase activity. Zinc center 1 plays an important role in the autonomous, DnaK-independent chaperone activity of DnaJ. Zinc center 2 is essential for interaction with DnaK and for DnaJ activity.</text>
</comment>
<comment type="similarity">
    <text evidence="1">Belongs to the DnaJ family.</text>
</comment>
<organism>
    <name type="scientific">Cereibacter sphaeroides (strain ATCC 17029 / ATH 2.4.9)</name>
    <name type="common">Rhodobacter sphaeroides</name>
    <dbReference type="NCBI Taxonomy" id="349101"/>
    <lineage>
        <taxon>Bacteria</taxon>
        <taxon>Pseudomonadati</taxon>
        <taxon>Pseudomonadota</taxon>
        <taxon>Alphaproteobacteria</taxon>
        <taxon>Rhodobacterales</taxon>
        <taxon>Paracoccaceae</taxon>
        <taxon>Cereibacter</taxon>
    </lineage>
</organism>
<proteinExistence type="inferred from homology"/>
<dbReference type="EMBL" id="CP000577">
    <property type="protein sequence ID" value="ABN77936.1"/>
    <property type="molecule type" value="Genomic_DNA"/>
</dbReference>
<dbReference type="RefSeq" id="WP_011841909.1">
    <property type="nucleotide sequence ID" value="NC_009049.1"/>
</dbReference>
<dbReference type="SMR" id="A3PNM0"/>
<dbReference type="KEGG" id="rsh:Rsph17029_2834"/>
<dbReference type="HOGENOM" id="CLU_017633_0_7_5"/>
<dbReference type="GO" id="GO:0005737">
    <property type="term" value="C:cytoplasm"/>
    <property type="evidence" value="ECO:0007669"/>
    <property type="project" value="UniProtKB-SubCell"/>
</dbReference>
<dbReference type="GO" id="GO:0005524">
    <property type="term" value="F:ATP binding"/>
    <property type="evidence" value="ECO:0007669"/>
    <property type="project" value="InterPro"/>
</dbReference>
<dbReference type="GO" id="GO:0031072">
    <property type="term" value="F:heat shock protein binding"/>
    <property type="evidence" value="ECO:0007669"/>
    <property type="project" value="InterPro"/>
</dbReference>
<dbReference type="GO" id="GO:0051082">
    <property type="term" value="F:unfolded protein binding"/>
    <property type="evidence" value="ECO:0007669"/>
    <property type="project" value="UniProtKB-UniRule"/>
</dbReference>
<dbReference type="GO" id="GO:0008270">
    <property type="term" value="F:zinc ion binding"/>
    <property type="evidence" value="ECO:0007669"/>
    <property type="project" value="UniProtKB-UniRule"/>
</dbReference>
<dbReference type="GO" id="GO:0051085">
    <property type="term" value="P:chaperone cofactor-dependent protein refolding"/>
    <property type="evidence" value="ECO:0007669"/>
    <property type="project" value="TreeGrafter"/>
</dbReference>
<dbReference type="GO" id="GO:0006260">
    <property type="term" value="P:DNA replication"/>
    <property type="evidence" value="ECO:0007669"/>
    <property type="project" value="UniProtKB-KW"/>
</dbReference>
<dbReference type="GO" id="GO:0042026">
    <property type="term" value="P:protein refolding"/>
    <property type="evidence" value="ECO:0007669"/>
    <property type="project" value="TreeGrafter"/>
</dbReference>
<dbReference type="GO" id="GO:0009408">
    <property type="term" value="P:response to heat"/>
    <property type="evidence" value="ECO:0007669"/>
    <property type="project" value="InterPro"/>
</dbReference>
<dbReference type="CDD" id="cd06257">
    <property type="entry name" value="DnaJ"/>
    <property type="match status" value="1"/>
</dbReference>
<dbReference type="CDD" id="cd10747">
    <property type="entry name" value="DnaJ_C"/>
    <property type="match status" value="1"/>
</dbReference>
<dbReference type="CDD" id="cd10719">
    <property type="entry name" value="DnaJ_zf"/>
    <property type="match status" value="1"/>
</dbReference>
<dbReference type="FunFam" id="1.10.287.110:FF:000034">
    <property type="entry name" value="Chaperone protein DnaJ"/>
    <property type="match status" value="1"/>
</dbReference>
<dbReference type="FunFam" id="2.10.230.10:FF:000002">
    <property type="entry name" value="Molecular chaperone DnaJ"/>
    <property type="match status" value="1"/>
</dbReference>
<dbReference type="FunFam" id="2.60.260.20:FF:000004">
    <property type="entry name" value="Molecular chaperone DnaJ"/>
    <property type="match status" value="1"/>
</dbReference>
<dbReference type="Gene3D" id="1.10.287.110">
    <property type="entry name" value="DnaJ domain"/>
    <property type="match status" value="1"/>
</dbReference>
<dbReference type="Gene3D" id="2.10.230.10">
    <property type="entry name" value="Heat shock protein DnaJ, cysteine-rich domain"/>
    <property type="match status" value="1"/>
</dbReference>
<dbReference type="Gene3D" id="2.60.260.20">
    <property type="entry name" value="Urease metallochaperone UreE, N-terminal domain"/>
    <property type="match status" value="2"/>
</dbReference>
<dbReference type="HAMAP" id="MF_01152">
    <property type="entry name" value="DnaJ"/>
    <property type="match status" value="1"/>
</dbReference>
<dbReference type="InterPro" id="IPR012724">
    <property type="entry name" value="DnaJ"/>
</dbReference>
<dbReference type="InterPro" id="IPR002939">
    <property type="entry name" value="DnaJ_C"/>
</dbReference>
<dbReference type="InterPro" id="IPR001623">
    <property type="entry name" value="DnaJ_domain"/>
</dbReference>
<dbReference type="InterPro" id="IPR018253">
    <property type="entry name" value="DnaJ_domain_CS"/>
</dbReference>
<dbReference type="InterPro" id="IPR008971">
    <property type="entry name" value="HSP40/DnaJ_pept-bd"/>
</dbReference>
<dbReference type="InterPro" id="IPR001305">
    <property type="entry name" value="HSP_DnaJ_Cys-rich_dom"/>
</dbReference>
<dbReference type="InterPro" id="IPR036410">
    <property type="entry name" value="HSP_DnaJ_Cys-rich_dom_sf"/>
</dbReference>
<dbReference type="InterPro" id="IPR036869">
    <property type="entry name" value="J_dom_sf"/>
</dbReference>
<dbReference type="NCBIfam" id="TIGR02349">
    <property type="entry name" value="DnaJ_bact"/>
    <property type="match status" value="1"/>
</dbReference>
<dbReference type="NCBIfam" id="NF008035">
    <property type="entry name" value="PRK10767.1"/>
    <property type="match status" value="1"/>
</dbReference>
<dbReference type="PANTHER" id="PTHR43096:SF48">
    <property type="entry name" value="CHAPERONE PROTEIN DNAJ"/>
    <property type="match status" value="1"/>
</dbReference>
<dbReference type="PANTHER" id="PTHR43096">
    <property type="entry name" value="DNAJ HOMOLOG 1, MITOCHONDRIAL-RELATED"/>
    <property type="match status" value="1"/>
</dbReference>
<dbReference type="Pfam" id="PF00226">
    <property type="entry name" value="DnaJ"/>
    <property type="match status" value="1"/>
</dbReference>
<dbReference type="Pfam" id="PF01556">
    <property type="entry name" value="DnaJ_C"/>
    <property type="match status" value="1"/>
</dbReference>
<dbReference type="Pfam" id="PF00684">
    <property type="entry name" value="DnaJ_CXXCXGXG"/>
    <property type="match status" value="1"/>
</dbReference>
<dbReference type="PRINTS" id="PR00625">
    <property type="entry name" value="JDOMAIN"/>
</dbReference>
<dbReference type="SMART" id="SM00271">
    <property type="entry name" value="DnaJ"/>
    <property type="match status" value="1"/>
</dbReference>
<dbReference type="SUPFAM" id="SSF46565">
    <property type="entry name" value="Chaperone J-domain"/>
    <property type="match status" value="1"/>
</dbReference>
<dbReference type="SUPFAM" id="SSF57938">
    <property type="entry name" value="DnaJ/Hsp40 cysteine-rich domain"/>
    <property type="match status" value="1"/>
</dbReference>
<dbReference type="SUPFAM" id="SSF49493">
    <property type="entry name" value="HSP40/DnaJ peptide-binding domain"/>
    <property type="match status" value="2"/>
</dbReference>
<dbReference type="PROSITE" id="PS00636">
    <property type="entry name" value="DNAJ_1"/>
    <property type="match status" value="1"/>
</dbReference>
<dbReference type="PROSITE" id="PS50076">
    <property type="entry name" value="DNAJ_2"/>
    <property type="match status" value="1"/>
</dbReference>
<dbReference type="PROSITE" id="PS51188">
    <property type="entry name" value="ZF_CR"/>
    <property type="match status" value="1"/>
</dbReference>
<sequence>MAKRDYYEVLGVSRTASADELKKAYRTKAKELHPDRNADNPQAEAQFKEVNEAYDVLRDADKKAAYDRYGHAAFEGGMGGGARAGGGYGQQGDFASAFSDVFEDLFGDFMGGRGGAPRSRAQRGSDLRYNLRVTLDEAYRGVQKTINVPASVACDACKGTGAEGGAEAVTCPTCSGMGKVRAQQGFFTVERTCPTCNGMGQIVKNPCKVCHGAGRVEKERSLSVNIPAGVETGTRIRLAGEGEAGMRGGPSGDLYIFIEVREHALFQRDGVHLFCRVPVSITAAALGGEVEVPTIDGGSSRVKIPAGSQTGKQMRLRGKGMPALRGGGAGDMLIELAVETPVNLTARQKELLREFEKLSEDNNPEGKSFFSKVKGFWDGMTG</sequence>
<protein>
    <recommendedName>
        <fullName evidence="1">Chaperone protein DnaJ</fullName>
    </recommendedName>
</protein>
<gene>
    <name evidence="1" type="primary">dnaJ</name>
    <name type="ordered locus">Rsph17029_2834</name>
</gene>
<accession>A3PNM0</accession>